<feature type="chain" id="PRO_0000383047" description="Nucleoporin SEH1">
    <location>
        <begin position="1"/>
        <end position="364"/>
    </location>
</feature>
<feature type="repeat" description="WD 1">
    <location>
        <begin position="10"/>
        <end position="49"/>
    </location>
</feature>
<feature type="repeat" description="WD 2">
    <location>
        <begin position="55"/>
        <end position="96"/>
    </location>
</feature>
<feature type="repeat" description="WD 3">
    <location>
        <begin position="111"/>
        <end position="152"/>
    </location>
</feature>
<feature type="repeat" description="WD 4">
    <location>
        <begin position="160"/>
        <end position="210"/>
    </location>
</feature>
<feature type="repeat" description="WD 5">
    <location>
        <begin position="217"/>
        <end position="258"/>
    </location>
</feature>
<feature type="repeat" description="WD 6">
    <location>
        <begin position="276"/>
        <end position="315"/>
    </location>
</feature>
<feature type="sequence conflict" description="In Ref. 1; AAQ97847." evidence="2" ref="1">
    <original>T</original>
    <variation>S</variation>
    <location>
        <position position="353"/>
    </location>
</feature>
<evidence type="ECO:0000250" key="1">
    <source>
        <dbReference type="UniProtKB" id="Q96EE3"/>
    </source>
</evidence>
<evidence type="ECO:0000305" key="2"/>
<keyword id="KW-0131">Cell cycle</keyword>
<keyword id="KW-0132">Cell division</keyword>
<keyword id="KW-0137">Centromere</keyword>
<keyword id="KW-0158">Chromosome</keyword>
<keyword id="KW-0159">Chromosome partition</keyword>
<keyword id="KW-0995">Kinetochore</keyword>
<keyword id="KW-0458">Lysosome</keyword>
<keyword id="KW-0472">Membrane</keyword>
<keyword id="KW-0498">Mitosis</keyword>
<keyword id="KW-0509">mRNA transport</keyword>
<keyword id="KW-0906">Nuclear pore complex</keyword>
<keyword id="KW-0539">Nucleus</keyword>
<keyword id="KW-0653">Protein transport</keyword>
<keyword id="KW-1185">Reference proteome</keyword>
<keyword id="KW-0677">Repeat</keyword>
<keyword id="KW-0811">Translocation</keyword>
<keyword id="KW-0813">Transport</keyword>
<keyword id="KW-0853">WD repeat</keyword>
<sequence>MFVAKSIAADHKDLIHDVSYDFHGRRMATCSSDQSVKVWDKGDDGEWHCTASWKTHSGSVWRVTWAHPEFGQVLASCSFDRTAAVWEEIVGESNDKQRGQSHWIKRTTLVDSRTSVTDVKFAPKHMGLMLTTCSADGVVRIYEAPDVMNLSQWSLQHEISCKLACSCISWNPSSSRAHPPMIAVGGDDSNGAYSGKVQIHEYNENTRKYAKAETLMTVTDPVHDIAFAPNLGRSFHVLAIATKDVRIFKLLPLRRESANSSGPTKFEVQVMAQFDSHNSQVWRVSWNITSTLLASSGDDGCVRLWKANYMDNWKCTGILRGDGSPVNGSSGPSAALSAVGVPGAAQMIVGAATAGRKKAQLMPG</sequence>
<organism>
    <name type="scientific">Danio rerio</name>
    <name type="common">Zebrafish</name>
    <name type="synonym">Brachydanio rerio</name>
    <dbReference type="NCBI Taxonomy" id="7955"/>
    <lineage>
        <taxon>Eukaryota</taxon>
        <taxon>Metazoa</taxon>
        <taxon>Chordata</taxon>
        <taxon>Craniata</taxon>
        <taxon>Vertebrata</taxon>
        <taxon>Euteleostomi</taxon>
        <taxon>Actinopterygii</taxon>
        <taxon>Neopterygii</taxon>
        <taxon>Teleostei</taxon>
        <taxon>Ostariophysi</taxon>
        <taxon>Cypriniformes</taxon>
        <taxon>Danionidae</taxon>
        <taxon>Danioninae</taxon>
        <taxon>Danio</taxon>
    </lineage>
</organism>
<gene>
    <name type="primary">seh1l</name>
    <name type="synonym">sec13l</name>
    <name type="ORF">si:dkey-263o22.4</name>
</gene>
<dbReference type="EMBL" id="AY398414">
    <property type="protein sequence ID" value="AAQ97847.1"/>
    <property type="molecule type" value="mRNA"/>
</dbReference>
<dbReference type="EMBL" id="BX294130">
    <property type="protein sequence ID" value="CAK10890.1"/>
    <property type="molecule type" value="Genomic_DNA"/>
</dbReference>
<dbReference type="RefSeq" id="NP_956217.2">
    <property type="nucleotide sequence ID" value="NM_199923.2"/>
</dbReference>
<dbReference type="SMR" id="Q6TGU2"/>
<dbReference type="FunCoup" id="Q6TGU2">
    <property type="interactions" value="1816"/>
</dbReference>
<dbReference type="STRING" id="7955.ENSDARP00000003173"/>
<dbReference type="PaxDb" id="7955-ENSDARP00000003173"/>
<dbReference type="Ensembl" id="ENSDART00000013865">
    <property type="protein sequence ID" value="ENSDARP00000003173"/>
    <property type="gene ID" value="ENSDARG00000004280"/>
</dbReference>
<dbReference type="GeneID" id="334749"/>
<dbReference type="KEGG" id="dre:334749"/>
<dbReference type="AGR" id="ZFIN:ZDB-GENE-030131-6689"/>
<dbReference type="CTD" id="81929"/>
<dbReference type="ZFIN" id="ZDB-GENE-030131-6689">
    <property type="gene designation" value="seh1l"/>
</dbReference>
<dbReference type="eggNOG" id="KOG2445">
    <property type="taxonomic scope" value="Eukaryota"/>
</dbReference>
<dbReference type="HOGENOM" id="CLU_032441_1_2_1"/>
<dbReference type="InParanoid" id="Q6TGU2"/>
<dbReference type="OMA" id="NAPTRRW"/>
<dbReference type="OrthoDB" id="364224at2759"/>
<dbReference type="PhylomeDB" id="Q6TGU2"/>
<dbReference type="TreeFam" id="TF105924"/>
<dbReference type="PRO" id="PR:Q6TGU2"/>
<dbReference type="Proteomes" id="UP000000437">
    <property type="component" value="Chromosome 19"/>
</dbReference>
<dbReference type="Bgee" id="ENSDARG00000004280">
    <property type="expression patterns" value="Expressed in presomitic mesoderm and 26 other cell types or tissues"/>
</dbReference>
<dbReference type="ExpressionAtlas" id="Q6TGU2">
    <property type="expression patterns" value="baseline and differential"/>
</dbReference>
<dbReference type="GO" id="GO:0061700">
    <property type="term" value="C:GATOR2 complex"/>
    <property type="evidence" value="ECO:0000250"/>
    <property type="project" value="UniProtKB"/>
</dbReference>
<dbReference type="GO" id="GO:0000776">
    <property type="term" value="C:kinetochore"/>
    <property type="evidence" value="ECO:0007669"/>
    <property type="project" value="UniProtKB-KW"/>
</dbReference>
<dbReference type="GO" id="GO:0005765">
    <property type="term" value="C:lysosomal membrane"/>
    <property type="evidence" value="ECO:0000250"/>
    <property type="project" value="UniProtKB"/>
</dbReference>
<dbReference type="GO" id="GO:0031080">
    <property type="term" value="C:nuclear pore outer ring"/>
    <property type="evidence" value="ECO:0000250"/>
    <property type="project" value="UniProtKB"/>
</dbReference>
<dbReference type="GO" id="GO:0035859">
    <property type="term" value="C:Seh1-associated complex"/>
    <property type="evidence" value="ECO:0000318"/>
    <property type="project" value="GO_Central"/>
</dbReference>
<dbReference type="GO" id="GO:0005198">
    <property type="term" value="F:structural molecule activity"/>
    <property type="evidence" value="ECO:0007669"/>
    <property type="project" value="InterPro"/>
</dbReference>
<dbReference type="GO" id="GO:0051315">
    <property type="term" value="P:attachment of mitotic spindle microtubules to kinetochore"/>
    <property type="evidence" value="ECO:0000250"/>
    <property type="project" value="UniProtKB"/>
</dbReference>
<dbReference type="GO" id="GO:0051301">
    <property type="term" value="P:cell division"/>
    <property type="evidence" value="ECO:0007669"/>
    <property type="project" value="UniProtKB-KW"/>
</dbReference>
<dbReference type="GO" id="GO:0034198">
    <property type="term" value="P:cellular response to amino acid starvation"/>
    <property type="evidence" value="ECO:0000318"/>
    <property type="project" value="GO_Central"/>
</dbReference>
<dbReference type="GO" id="GO:0031669">
    <property type="term" value="P:cellular response to nutrient levels"/>
    <property type="evidence" value="ECO:0000250"/>
    <property type="project" value="UniProtKB"/>
</dbReference>
<dbReference type="GO" id="GO:0007080">
    <property type="term" value="P:mitotic metaphase chromosome alignment"/>
    <property type="evidence" value="ECO:0000250"/>
    <property type="project" value="UniProtKB"/>
</dbReference>
<dbReference type="GO" id="GO:0051028">
    <property type="term" value="P:mRNA transport"/>
    <property type="evidence" value="ECO:0007669"/>
    <property type="project" value="UniProtKB-KW"/>
</dbReference>
<dbReference type="GO" id="GO:0006999">
    <property type="term" value="P:nuclear pore organization"/>
    <property type="evidence" value="ECO:0000250"/>
    <property type="project" value="UniProtKB"/>
</dbReference>
<dbReference type="GO" id="GO:1904263">
    <property type="term" value="P:positive regulation of TORC1 signaling"/>
    <property type="evidence" value="ECO:0000250"/>
    <property type="project" value="UniProtKB"/>
</dbReference>
<dbReference type="GO" id="GO:0015031">
    <property type="term" value="P:protein transport"/>
    <property type="evidence" value="ECO:0007669"/>
    <property type="project" value="UniProtKB-KW"/>
</dbReference>
<dbReference type="FunFam" id="2.130.10.10:FF:000063">
    <property type="entry name" value="SEH1 like nucleoporin"/>
    <property type="match status" value="1"/>
</dbReference>
<dbReference type="Gene3D" id="2.130.10.10">
    <property type="entry name" value="YVTN repeat-like/Quinoprotein amine dehydrogenase"/>
    <property type="match status" value="1"/>
</dbReference>
<dbReference type="InterPro" id="IPR020472">
    <property type="entry name" value="G-protein_beta_WD-40_rep"/>
</dbReference>
<dbReference type="InterPro" id="IPR037363">
    <property type="entry name" value="Sec13/Seh1_fam"/>
</dbReference>
<dbReference type="InterPro" id="IPR015943">
    <property type="entry name" value="WD40/YVTN_repeat-like_dom_sf"/>
</dbReference>
<dbReference type="InterPro" id="IPR036322">
    <property type="entry name" value="WD40_repeat_dom_sf"/>
</dbReference>
<dbReference type="InterPro" id="IPR001680">
    <property type="entry name" value="WD40_rpt"/>
</dbReference>
<dbReference type="PANTHER" id="PTHR11024">
    <property type="entry name" value="NUCLEAR PORE COMPLEX PROTEIN SEC13 / SEH1 FAMILY MEMBER"/>
    <property type="match status" value="1"/>
</dbReference>
<dbReference type="PANTHER" id="PTHR11024:SF3">
    <property type="entry name" value="NUCLEOPORIN SEH1"/>
    <property type="match status" value="1"/>
</dbReference>
<dbReference type="Pfam" id="PF00400">
    <property type="entry name" value="WD40"/>
    <property type="match status" value="4"/>
</dbReference>
<dbReference type="PRINTS" id="PR00320">
    <property type="entry name" value="GPROTEINBRPT"/>
</dbReference>
<dbReference type="SMART" id="SM00320">
    <property type="entry name" value="WD40"/>
    <property type="match status" value="5"/>
</dbReference>
<dbReference type="SUPFAM" id="SSF50978">
    <property type="entry name" value="WD40 repeat-like"/>
    <property type="match status" value="1"/>
</dbReference>
<dbReference type="PROSITE" id="PS50082">
    <property type="entry name" value="WD_REPEATS_2"/>
    <property type="match status" value="2"/>
</dbReference>
<dbReference type="PROSITE" id="PS50294">
    <property type="entry name" value="WD_REPEATS_REGION"/>
    <property type="match status" value="2"/>
</dbReference>
<name>SEH1_DANRE</name>
<comment type="function">
    <text evidence="1">Component of the Nup107-160 subcomplex of the nuclear pore complex (NPC). The Nup107-160 subcomplex is required for the assembly of a functional NPC. The Nup107-160 subcomplex is also required for normal kinetochore microtubule attachment, mitotic progression and chromosome segregation. This subunit plays a role in recruitment of the Nup107-160 subcomplex to the kinetochore.</text>
</comment>
<comment type="function">
    <text evidence="1">As a component of the GATOR2 complex, functions as an activator of the amino acid-sensing branch of the mTORC1 signaling pathway. The GATOR2 complex indirectly activates mTORC1 through the inhibition of the GATOR1 subcomplex. GATOR2 probably acts as an E3 ubiquitin-protein ligase toward GATOR1. In the presence of abundant amino acids, the GATOR2 complex mediates ubiquitination of the NPRL2 core component of the GATOR1 complex, leading to GATOR1 inactivation. In the absence of amino acids, GATOR2 is inhibited, activating the GATOR1 complex.</text>
</comment>
<comment type="activity regulation">
    <text evidence="1">The GATOR2 complex is negatively regulated by the upstream amino acid sensors CASTOR1 and SESN2, which sequester the GATOR2 complex in absence of amino acids. In the presence of abundant amino acids, GATOR2 is released from CASTOR1 and SESN2 and activated.</text>
</comment>
<comment type="subunit">
    <text evidence="1">Component of the Nup107-160 subcomplex of the nuclear pore complex (NPC). The Nup107-160 subcomplex includes NUP160, NUP133, NUP107, NUP98, NUP85, NUP43, NUP37, SEH1 and SEC13. Component of the GATOR2 subcomplex, composed of MIOS, SEC13, SEH1L, WDR24 and WDR59. The GATOR2 complex interacts with CASTOR1 and CASTOR2; the interaction is negatively regulated by arginine. The GATOR2 complex interacts with SESN1, SESN2 and SESN3; the interaction is negatively regulated by amino acids.</text>
</comment>
<comment type="subcellular location">
    <subcellularLocation>
        <location evidence="1">Chromosome</location>
        <location evidence="1">Centromere</location>
        <location evidence="1">Kinetochore</location>
    </subcellularLocation>
    <subcellularLocation>
        <location evidence="1">Nucleus</location>
        <location evidence="1">Nuclear pore complex</location>
    </subcellularLocation>
    <subcellularLocation>
        <location evidence="1">Lysosome membrane</location>
    </subcellularLocation>
</comment>
<comment type="similarity">
    <text evidence="2">Belongs to the WD repeat SEC13 family.</text>
</comment>
<protein>
    <recommendedName>
        <fullName evidence="2">Nucleoporin SEH1</fullName>
    </recommendedName>
    <alternativeName>
        <fullName evidence="2">GATOR2 complex protein SEH1</fullName>
    </alternativeName>
    <alternativeName>
        <fullName>Nup107-160 subcomplex subunit seh1</fullName>
    </alternativeName>
</protein>
<reference key="1">
    <citation type="journal article" date="2004" name="Proc. Natl. Acad. Sci. U.S.A.">
        <title>Hematopoietic gene expression profile in zebrafish kidney marrow.</title>
        <authorList>
            <person name="Song H.-D."/>
            <person name="Sun X.-J."/>
            <person name="Deng M."/>
            <person name="Zhang G.-W."/>
            <person name="Zhou Y."/>
            <person name="Wu X.-Y."/>
            <person name="Sheng Y."/>
            <person name="Chen Y."/>
            <person name="Ruan Z."/>
            <person name="Jiang C.-L."/>
            <person name="Fan H.-Y."/>
            <person name="Zon L.I."/>
            <person name="Kanki J.P."/>
            <person name="Liu T.X."/>
            <person name="Look A.T."/>
            <person name="Chen Z."/>
        </authorList>
    </citation>
    <scope>NUCLEOTIDE SEQUENCE [LARGE SCALE MRNA]</scope>
    <source>
        <tissue>Kidney marrow</tissue>
    </source>
</reference>
<reference key="2">
    <citation type="journal article" date="2013" name="Nature">
        <title>The zebrafish reference genome sequence and its relationship to the human genome.</title>
        <authorList>
            <person name="Howe K."/>
            <person name="Clark M.D."/>
            <person name="Torroja C.F."/>
            <person name="Torrance J."/>
            <person name="Berthelot C."/>
            <person name="Muffato M."/>
            <person name="Collins J.E."/>
            <person name="Humphray S."/>
            <person name="McLaren K."/>
            <person name="Matthews L."/>
            <person name="McLaren S."/>
            <person name="Sealy I."/>
            <person name="Caccamo M."/>
            <person name="Churcher C."/>
            <person name="Scott C."/>
            <person name="Barrett J.C."/>
            <person name="Koch R."/>
            <person name="Rauch G.J."/>
            <person name="White S."/>
            <person name="Chow W."/>
            <person name="Kilian B."/>
            <person name="Quintais L.T."/>
            <person name="Guerra-Assuncao J.A."/>
            <person name="Zhou Y."/>
            <person name="Gu Y."/>
            <person name="Yen J."/>
            <person name="Vogel J.H."/>
            <person name="Eyre T."/>
            <person name="Redmond S."/>
            <person name="Banerjee R."/>
            <person name="Chi J."/>
            <person name="Fu B."/>
            <person name="Langley E."/>
            <person name="Maguire S.F."/>
            <person name="Laird G.K."/>
            <person name="Lloyd D."/>
            <person name="Kenyon E."/>
            <person name="Donaldson S."/>
            <person name="Sehra H."/>
            <person name="Almeida-King J."/>
            <person name="Loveland J."/>
            <person name="Trevanion S."/>
            <person name="Jones M."/>
            <person name="Quail M."/>
            <person name="Willey D."/>
            <person name="Hunt A."/>
            <person name="Burton J."/>
            <person name="Sims S."/>
            <person name="McLay K."/>
            <person name="Plumb B."/>
            <person name="Davis J."/>
            <person name="Clee C."/>
            <person name="Oliver K."/>
            <person name="Clark R."/>
            <person name="Riddle C."/>
            <person name="Elliot D."/>
            <person name="Threadgold G."/>
            <person name="Harden G."/>
            <person name="Ware D."/>
            <person name="Begum S."/>
            <person name="Mortimore B."/>
            <person name="Kerry G."/>
            <person name="Heath P."/>
            <person name="Phillimore B."/>
            <person name="Tracey A."/>
            <person name="Corby N."/>
            <person name="Dunn M."/>
            <person name="Johnson C."/>
            <person name="Wood J."/>
            <person name="Clark S."/>
            <person name="Pelan S."/>
            <person name="Griffiths G."/>
            <person name="Smith M."/>
            <person name="Glithero R."/>
            <person name="Howden P."/>
            <person name="Barker N."/>
            <person name="Lloyd C."/>
            <person name="Stevens C."/>
            <person name="Harley J."/>
            <person name="Holt K."/>
            <person name="Panagiotidis G."/>
            <person name="Lovell J."/>
            <person name="Beasley H."/>
            <person name="Henderson C."/>
            <person name="Gordon D."/>
            <person name="Auger K."/>
            <person name="Wright D."/>
            <person name="Collins J."/>
            <person name="Raisen C."/>
            <person name="Dyer L."/>
            <person name="Leung K."/>
            <person name="Robertson L."/>
            <person name="Ambridge K."/>
            <person name="Leongamornlert D."/>
            <person name="McGuire S."/>
            <person name="Gilderthorp R."/>
            <person name="Griffiths C."/>
            <person name="Manthravadi D."/>
            <person name="Nichol S."/>
            <person name="Barker G."/>
            <person name="Whitehead S."/>
            <person name="Kay M."/>
            <person name="Brown J."/>
            <person name="Murnane C."/>
            <person name="Gray E."/>
            <person name="Humphries M."/>
            <person name="Sycamore N."/>
            <person name="Barker D."/>
            <person name="Saunders D."/>
            <person name="Wallis J."/>
            <person name="Babbage A."/>
            <person name="Hammond S."/>
            <person name="Mashreghi-Mohammadi M."/>
            <person name="Barr L."/>
            <person name="Martin S."/>
            <person name="Wray P."/>
            <person name="Ellington A."/>
            <person name="Matthews N."/>
            <person name="Ellwood M."/>
            <person name="Woodmansey R."/>
            <person name="Clark G."/>
            <person name="Cooper J."/>
            <person name="Tromans A."/>
            <person name="Grafham D."/>
            <person name="Skuce C."/>
            <person name="Pandian R."/>
            <person name="Andrews R."/>
            <person name="Harrison E."/>
            <person name="Kimberley A."/>
            <person name="Garnett J."/>
            <person name="Fosker N."/>
            <person name="Hall R."/>
            <person name="Garner P."/>
            <person name="Kelly D."/>
            <person name="Bird C."/>
            <person name="Palmer S."/>
            <person name="Gehring I."/>
            <person name="Berger A."/>
            <person name="Dooley C.M."/>
            <person name="Ersan-Urun Z."/>
            <person name="Eser C."/>
            <person name="Geiger H."/>
            <person name="Geisler M."/>
            <person name="Karotki L."/>
            <person name="Kirn A."/>
            <person name="Konantz J."/>
            <person name="Konantz M."/>
            <person name="Oberlander M."/>
            <person name="Rudolph-Geiger S."/>
            <person name="Teucke M."/>
            <person name="Lanz C."/>
            <person name="Raddatz G."/>
            <person name="Osoegawa K."/>
            <person name="Zhu B."/>
            <person name="Rapp A."/>
            <person name="Widaa S."/>
            <person name="Langford C."/>
            <person name="Yang F."/>
            <person name="Schuster S.C."/>
            <person name="Carter N.P."/>
            <person name="Harrow J."/>
            <person name="Ning Z."/>
            <person name="Herrero J."/>
            <person name="Searle S.M."/>
            <person name="Enright A."/>
            <person name="Geisler R."/>
            <person name="Plasterk R.H."/>
            <person name="Lee C."/>
            <person name="Westerfield M."/>
            <person name="de Jong P.J."/>
            <person name="Zon L.I."/>
            <person name="Postlethwait J.H."/>
            <person name="Nusslein-Volhard C."/>
            <person name="Hubbard T.J."/>
            <person name="Roest Crollius H."/>
            <person name="Rogers J."/>
            <person name="Stemple D.L."/>
        </authorList>
    </citation>
    <scope>NUCLEOTIDE SEQUENCE [LARGE SCALE GENOMIC DNA]</scope>
    <source>
        <strain>Tuebingen</strain>
    </source>
</reference>
<accession>Q6TGU2</accession>
<accession>Q1LXR9</accession>
<proteinExistence type="evidence at transcript level"/>